<dbReference type="EC" id="1.1.1.336" evidence="3"/>
<dbReference type="EMBL" id="CP000743">
    <property type="protein sequence ID" value="ABR56070.1"/>
    <property type="molecule type" value="Genomic_DNA"/>
</dbReference>
<dbReference type="RefSeq" id="WP_011973202.1">
    <property type="nucleotide sequence ID" value="NC_009635.1"/>
</dbReference>
<dbReference type="SMR" id="A6UU98"/>
<dbReference type="STRING" id="419665.Maeo_0484"/>
<dbReference type="GeneID" id="5326336"/>
<dbReference type="KEGG" id="mae:Maeo_0484"/>
<dbReference type="eggNOG" id="arCOG00252">
    <property type="taxonomic scope" value="Archaea"/>
</dbReference>
<dbReference type="HOGENOM" id="CLU_023810_3_2_2"/>
<dbReference type="OrthoDB" id="372050at2157"/>
<dbReference type="Proteomes" id="UP000001106">
    <property type="component" value="Chromosome"/>
</dbReference>
<dbReference type="GO" id="GO:0051287">
    <property type="term" value="F:NAD binding"/>
    <property type="evidence" value="ECO:0007669"/>
    <property type="project" value="InterPro"/>
</dbReference>
<dbReference type="GO" id="GO:0016628">
    <property type="term" value="F:oxidoreductase activity, acting on the CH-CH group of donors, NAD or NADP as acceptor"/>
    <property type="evidence" value="ECO:0007669"/>
    <property type="project" value="InterPro"/>
</dbReference>
<dbReference type="GO" id="GO:0089714">
    <property type="term" value="F:UDP-N-acetyl-D-mannosamine dehydrogenase activity"/>
    <property type="evidence" value="ECO:0007669"/>
    <property type="project" value="UniProtKB-EC"/>
</dbReference>
<dbReference type="GO" id="GO:0000271">
    <property type="term" value="P:polysaccharide biosynthetic process"/>
    <property type="evidence" value="ECO:0007669"/>
    <property type="project" value="InterPro"/>
</dbReference>
<dbReference type="Gene3D" id="3.40.50.720">
    <property type="entry name" value="NAD(P)-binding Rossmann-like Domain"/>
    <property type="match status" value="2"/>
</dbReference>
<dbReference type="InterPro" id="IPR008927">
    <property type="entry name" value="6-PGluconate_DH-like_C_sf"/>
</dbReference>
<dbReference type="InterPro" id="IPR036291">
    <property type="entry name" value="NAD(P)-bd_dom_sf"/>
</dbReference>
<dbReference type="InterPro" id="IPR017476">
    <property type="entry name" value="UDP-Glc/GDP-Man"/>
</dbReference>
<dbReference type="InterPro" id="IPR014027">
    <property type="entry name" value="UDP-Glc/GDP-Man_DH_C"/>
</dbReference>
<dbReference type="InterPro" id="IPR036220">
    <property type="entry name" value="UDP-Glc/GDP-Man_DH_C_sf"/>
</dbReference>
<dbReference type="InterPro" id="IPR014026">
    <property type="entry name" value="UDP-Glc/GDP-Man_DH_dimer"/>
</dbReference>
<dbReference type="InterPro" id="IPR001732">
    <property type="entry name" value="UDP-Glc/GDP-Man_DH_N"/>
</dbReference>
<dbReference type="InterPro" id="IPR028359">
    <property type="entry name" value="UDP_ManNAc/GlcNAc_DH"/>
</dbReference>
<dbReference type="NCBIfam" id="TIGR03026">
    <property type="entry name" value="NDP-sugDHase"/>
    <property type="match status" value="1"/>
</dbReference>
<dbReference type="PANTHER" id="PTHR43491">
    <property type="entry name" value="UDP-N-ACETYL-D-MANNOSAMINE DEHYDROGENASE"/>
    <property type="match status" value="1"/>
</dbReference>
<dbReference type="PANTHER" id="PTHR43491:SF2">
    <property type="entry name" value="UDP-N-ACETYL-D-MANNOSAMINE DEHYDROGENASE"/>
    <property type="match status" value="1"/>
</dbReference>
<dbReference type="Pfam" id="PF00984">
    <property type="entry name" value="UDPG_MGDP_dh"/>
    <property type="match status" value="1"/>
</dbReference>
<dbReference type="Pfam" id="PF03720">
    <property type="entry name" value="UDPG_MGDP_dh_C"/>
    <property type="match status" value="1"/>
</dbReference>
<dbReference type="Pfam" id="PF03721">
    <property type="entry name" value="UDPG_MGDP_dh_N"/>
    <property type="match status" value="1"/>
</dbReference>
<dbReference type="PIRSF" id="PIRSF500136">
    <property type="entry name" value="UDP_ManNAc_DH"/>
    <property type="match status" value="1"/>
</dbReference>
<dbReference type="PIRSF" id="PIRSF000124">
    <property type="entry name" value="UDPglc_GDPman_dh"/>
    <property type="match status" value="1"/>
</dbReference>
<dbReference type="SMART" id="SM00984">
    <property type="entry name" value="UDPG_MGDP_dh_C"/>
    <property type="match status" value="1"/>
</dbReference>
<dbReference type="SUPFAM" id="SSF48179">
    <property type="entry name" value="6-phosphogluconate dehydrogenase C-terminal domain-like"/>
    <property type="match status" value="1"/>
</dbReference>
<dbReference type="SUPFAM" id="SSF51735">
    <property type="entry name" value="NAD(P)-binding Rossmann-fold domains"/>
    <property type="match status" value="1"/>
</dbReference>
<dbReference type="SUPFAM" id="SSF52413">
    <property type="entry name" value="UDP-glucose/GDP-mannose dehydrogenase C-terminal domain"/>
    <property type="match status" value="1"/>
</dbReference>
<gene>
    <name type="primary">wecC</name>
    <name type="ordered locus">Maeo_0484</name>
</gene>
<organism>
    <name type="scientific">Methanococcus aeolicus (strain ATCC BAA-1280 / DSM 17508 / OCM 812 / Nankai-3)</name>
    <dbReference type="NCBI Taxonomy" id="419665"/>
    <lineage>
        <taxon>Archaea</taxon>
        <taxon>Methanobacteriati</taxon>
        <taxon>Methanobacteriota</taxon>
        <taxon>Methanomada group</taxon>
        <taxon>Methanococci</taxon>
        <taxon>Methanococcales</taxon>
        <taxon>Methanococcaceae</taxon>
        <taxon>Methanococcus</taxon>
    </lineage>
</organism>
<sequence>MKLDKSKQKEINKICVVGLGYIGLPTASMLAIQGYKVIGVDIDEERVKTIRDGKLIINEQGLMTLLTGAITSGNLVVKTEPEEADVYIICVPTPATADKNGKKCDLICVLSAVNNIKPYLKDGDLIIIESTIPPKTTEKIYDDISKNTGKNIYMAYCPERVLPGNILKELVENDRTIGGINKKSAQLAKEIYASFIEGNLYITDSTTAEMVKLMENTFRDVNIALANEFAKVSTELDINVWDAINLANKHPRVNILNPGPGVGGHCISIDPWFIVGSSENAELIKKARNLNDDMPKYVASLIIKEFKEMGICNPKVGIFGITYKGDVEDTRETPARAIIDYLLQNDFEVSIYDPYAKDFEYPLNTIEESIKNSDALIFLTDHSEFKNFEKEDIKEISHMMKNKIVMDMKNTLNHNLWEEQGFNVKLLGDGKSWIVKTL</sequence>
<evidence type="ECO:0000250" key="1">
    <source>
        <dbReference type="UniProtKB" id="O59284"/>
    </source>
</evidence>
<evidence type="ECO:0000250" key="2">
    <source>
        <dbReference type="UniProtKB" id="P11759"/>
    </source>
</evidence>
<evidence type="ECO:0000250" key="3">
    <source>
        <dbReference type="UniProtKB" id="Q6LZC3"/>
    </source>
</evidence>
<evidence type="ECO:0000305" key="4"/>
<name>WECC_META3</name>
<accession>A6UU98</accession>
<keyword id="KW-0520">NAD</keyword>
<keyword id="KW-0560">Oxidoreductase</keyword>
<reference key="1">
    <citation type="submission" date="2007-06" db="EMBL/GenBank/DDBJ databases">
        <title>Complete sequence of Methanococcus aeolicus Nankai-3.</title>
        <authorList>
            <consortium name="US DOE Joint Genome Institute"/>
            <person name="Copeland A."/>
            <person name="Lucas S."/>
            <person name="Lapidus A."/>
            <person name="Barry K."/>
            <person name="Glavina del Rio T."/>
            <person name="Dalin E."/>
            <person name="Tice H."/>
            <person name="Pitluck S."/>
            <person name="Chain P."/>
            <person name="Malfatti S."/>
            <person name="Shin M."/>
            <person name="Vergez L."/>
            <person name="Schmutz J."/>
            <person name="Larimer F."/>
            <person name="Land M."/>
            <person name="Hauser L."/>
            <person name="Kyrpides N."/>
            <person name="Lykidis A."/>
            <person name="Sieprawska-Lupa M."/>
            <person name="Whitman W.B."/>
            <person name="Richardson P."/>
        </authorList>
    </citation>
    <scope>NUCLEOTIDE SEQUENCE [LARGE SCALE GENOMIC DNA]</scope>
    <source>
        <strain>ATCC BAA-1280 / DSM 17508 / OCM 812 / Nankai-3</strain>
    </source>
</reference>
<protein>
    <recommendedName>
        <fullName>UDP-N-acetyl-D-mannosamine dehydrogenase</fullName>
        <ecNumber evidence="3">1.1.1.336</ecNumber>
    </recommendedName>
    <alternativeName>
        <fullName>UDP-ManNAc 6-dehydrogenase</fullName>
    </alternativeName>
</protein>
<feature type="chain" id="PRO_0000337835" description="UDP-N-acetyl-D-mannosamine dehydrogenase">
    <location>
        <begin position="1"/>
        <end position="438"/>
    </location>
</feature>
<feature type="active site" description="Proton donor/acceptor" evidence="1">
    <location>
        <position position="212"/>
    </location>
</feature>
<feature type="active site" description="Nucleophile" evidence="1">
    <location>
        <position position="266"/>
    </location>
</feature>
<feature type="binding site" description="in chain A" evidence="2">
    <location>
        <position position="21"/>
    </location>
    <ligand>
        <name>NAD(+)</name>
        <dbReference type="ChEBI" id="CHEBI:57540"/>
        <note>ligand shared between homodimeric partners</note>
    </ligand>
</feature>
<feature type="binding site" description="in chain A" evidence="2">
    <location>
        <position position="22"/>
    </location>
    <ligand>
        <name>NAD(+)</name>
        <dbReference type="ChEBI" id="CHEBI:57540"/>
        <note>ligand shared between homodimeric partners</note>
    </ligand>
</feature>
<feature type="binding site" description="in chain A" evidence="2">
    <location>
        <position position="41"/>
    </location>
    <ligand>
        <name>NAD(+)</name>
        <dbReference type="ChEBI" id="CHEBI:57540"/>
        <note>ligand shared between homodimeric partners</note>
    </ligand>
</feature>
<feature type="binding site" description="in chain A" evidence="2">
    <location>
        <position position="46"/>
    </location>
    <ligand>
        <name>NAD(+)</name>
        <dbReference type="ChEBI" id="CHEBI:57540"/>
        <note>ligand shared between homodimeric partners</note>
    </ligand>
</feature>
<feature type="binding site" description="in chain A" evidence="2">
    <location>
        <position position="93"/>
    </location>
    <ligand>
        <name>NAD(+)</name>
        <dbReference type="ChEBI" id="CHEBI:57540"/>
        <note>ligand shared between homodimeric partners</note>
    </ligand>
</feature>
<feature type="binding site" description="in chain A" evidence="2">
    <location>
        <position position="131"/>
    </location>
    <ligand>
        <name>NAD(+)</name>
        <dbReference type="ChEBI" id="CHEBI:57540"/>
        <note>ligand shared between homodimeric partners</note>
    </ligand>
</feature>
<feature type="binding site" description="in chain A" evidence="1">
    <location>
        <position position="160"/>
    </location>
    <ligand>
        <name>UDP-N-acetyl-alpha-D-mannosaminouronate</name>
        <dbReference type="ChEBI" id="CHEBI:70731"/>
        <note>ligand shared between homodimeric partners</note>
    </ligand>
</feature>
<feature type="binding site" description="in chain A" evidence="1">
    <location>
        <position position="161"/>
    </location>
    <ligand>
        <name>UDP-N-acetyl-alpha-D-mannosaminouronate</name>
        <dbReference type="ChEBI" id="CHEBI:70731"/>
        <note>ligand shared between homodimeric partners</note>
    </ligand>
</feature>
<feature type="binding site" description="in chain A" evidence="1">
    <location>
        <position position="212"/>
    </location>
    <ligand>
        <name>UDP-N-acetyl-alpha-D-mannosaminouronate</name>
        <dbReference type="ChEBI" id="CHEBI:70731"/>
        <note>ligand shared between homodimeric partners</note>
    </ligand>
</feature>
<feature type="binding site" description="in chain A" evidence="1">
    <location>
        <position position="216"/>
    </location>
    <ligand>
        <name>UDP-N-acetyl-alpha-D-mannosaminouronate</name>
        <dbReference type="ChEBI" id="CHEBI:70731"/>
        <note>ligand shared between homodimeric partners</note>
    </ligand>
</feature>
<feature type="binding site" description="in chain A" evidence="1">
    <location>
        <position position="219"/>
    </location>
    <ligand>
        <name>UDP-N-acetyl-alpha-D-mannosaminouronate</name>
        <dbReference type="ChEBI" id="CHEBI:70731"/>
        <note>ligand shared between homodimeric partners</note>
    </ligand>
</feature>
<feature type="binding site" description="in chain B" evidence="1">
    <location>
        <position position="250"/>
    </location>
    <ligand>
        <name>UDP-N-acetyl-alpha-D-mannosaminouronate</name>
        <dbReference type="ChEBI" id="CHEBI:70731"/>
        <note>ligand shared between homodimeric partners</note>
    </ligand>
</feature>
<feature type="binding site" description="in chain B" evidence="1">
    <location>
        <position position="252"/>
    </location>
    <ligand>
        <name>UDP-N-acetyl-alpha-D-mannosaminouronate</name>
        <dbReference type="ChEBI" id="CHEBI:70731"/>
        <note>ligand shared between homodimeric partners</note>
    </ligand>
</feature>
<feature type="binding site" description="in chain A" evidence="1">
    <location>
        <position position="263"/>
    </location>
    <ligand>
        <name>UDP-N-acetyl-alpha-D-mannosaminouronate</name>
        <dbReference type="ChEBI" id="CHEBI:70731"/>
        <note>ligand shared between homodimeric partners</note>
    </ligand>
</feature>
<feature type="binding site" description="in chain A" evidence="1">
    <location>
        <position position="323"/>
    </location>
    <ligand>
        <name>UDP-N-acetyl-alpha-D-mannosaminouronate</name>
        <dbReference type="ChEBI" id="CHEBI:70731"/>
        <note>ligand shared between homodimeric partners</note>
    </ligand>
</feature>
<feature type="binding site" description="in chain A" evidence="1">
    <location>
        <position position="324"/>
    </location>
    <ligand>
        <name>UDP-N-acetyl-alpha-D-mannosaminouronate</name>
        <dbReference type="ChEBI" id="CHEBI:70731"/>
        <note>ligand shared between homodimeric partners</note>
    </ligand>
</feature>
<feature type="binding site" description="in chain B" evidence="2">
    <location>
        <position position="331"/>
    </location>
    <ligand>
        <name>NAD(+)</name>
        <dbReference type="ChEBI" id="CHEBI:57540"/>
        <note>ligand shared between homodimeric partners</note>
    </ligand>
</feature>
<feature type="binding site" description="in chain A" evidence="1">
    <location>
        <position position="409"/>
    </location>
    <ligand>
        <name>UDP-N-acetyl-alpha-D-mannosaminouronate</name>
        <dbReference type="ChEBI" id="CHEBI:70731"/>
        <note>ligand shared between homodimeric partners</note>
    </ligand>
</feature>
<comment type="function">
    <text evidence="3">Catalyzes the four-electron oxidation of UDP-N-acetyl-D-mannosamine (UDP-ManNAc), reducing NAD(+) and releasing UDP-N-acetylmannosaminuronic acid (UDP-ManNAcA).</text>
</comment>
<comment type="catalytic activity">
    <reaction evidence="3">
        <text>UDP-N-acetyl-alpha-D-mannosamine + 2 NAD(+) + H2O = UDP-N-acetyl-alpha-D-mannosaminouronate + 2 NADH + 3 H(+)</text>
        <dbReference type="Rhea" id="RHEA:25780"/>
        <dbReference type="ChEBI" id="CHEBI:15377"/>
        <dbReference type="ChEBI" id="CHEBI:15378"/>
        <dbReference type="ChEBI" id="CHEBI:57540"/>
        <dbReference type="ChEBI" id="CHEBI:57945"/>
        <dbReference type="ChEBI" id="CHEBI:68623"/>
        <dbReference type="ChEBI" id="CHEBI:70731"/>
        <dbReference type="EC" id="1.1.1.336"/>
    </reaction>
</comment>
<comment type="subunit">
    <text evidence="3">Homotetramer; probably dimer of dimers.</text>
</comment>
<comment type="similarity">
    <text evidence="4">Belongs to the UDP-glucose/GDP-mannose dehydrogenase family.</text>
</comment>
<proteinExistence type="inferred from homology"/>